<organism>
    <name type="scientific">Wolbachia pipientis wMel</name>
    <dbReference type="NCBI Taxonomy" id="163164"/>
    <lineage>
        <taxon>Bacteria</taxon>
        <taxon>Pseudomonadati</taxon>
        <taxon>Pseudomonadota</taxon>
        <taxon>Alphaproteobacteria</taxon>
        <taxon>Rickettsiales</taxon>
        <taxon>Anaplasmataceae</taxon>
        <taxon>Wolbachieae</taxon>
        <taxon>Wolbachia</taxon>
    </lineage>
</organism>
<proteinExistence type="inferred from homology"/>
<feature type="chain" id="PRO_0000029815" description="Phosphatidylserine decarboxylase beta chain" evidence="1">
    <location>
        <begin position="1"/>
        <end position="185"/>
    </location>
</feature>
<feature type="chain" id="PRO_0000029816" description="Phosphatidylserine decarboxylase alpha chain" evidence="1">
    <location>
        <begin position="186"/>
        <end position="230"/>
    </location>
</feature>
<feature type="active site" description="Schiff-base intermediate with substrate; via pyruvic acid" evidence="1">
    <location>
        <position position="186"/>
    </location>
</feature>
<feature type="site" description="Cleavage (non-hydrolytic); by autocatalysis" evidence="1">
    <location>
        <begin position="185"/>
        <end position="186"/>
    </location>
</feature>
<feature type="modified residue" description="Pyruvic acid (Ser); by autocatalysis" evidence="1">
    <location>
        <position position="186"/>
    </location>
</feature>
<keyword id="KW-1003">Cell membrane</keyword>
<keyword id="KW-0210">Decarboxylase</keyword>
<keyword id="KW-0444">Lipid biosynthesis</keyword>
<keyword id="KW-0443">Lipid metabolism</keyword>
<keyword id="KW-0456">Lyase</keyword>
<keyword id="KW-0472">Membrane</keyword>
<keyword id="KW-0594">Phospholipid biosynthesis</keyword>
<keyword id="KW-1208">Phospholipid metabolism</keyword>
<keyword id="KW-0670">Pyruvate</keyword>
<keyword id="KW-0865">Zymogen</keyword>
<accession>Q73GB0</accession>
<evidence type="ECO:0000255" key="1">
    <source>
        <dbReference type="HAMAP-Rule" id="MF_00664"/>
    </source>
</evidence>
<dbReference type="EC" id="4.1.1.65" evidence="1"/>
<dbReference type="EMBL" id="AE017196">
    <property type="protein sequence ID" value="AAS14706.1"/>
    <property type="molecule type" value="Genomic_DNA"/>
</dbReference>
<dbReference type="RefSeq" id="WP_007548750.1">
    <property type="nucleotide sequence ID" value="NZ_OX384529.1"/>
</dbReference>
<dbReference type="SMR" id="Q73GB0"/>
<dbReference type="EnsemblBacteria" id="AAS14706">
    <property type="protein sequence ID" value="AAS14706"/>
    <property type="gene ID" value="WD_1049"/>
</dbReference>
<dbReference type="KEGG" id="wol:WD_1049"/>
<dbReference type="eggNOG" id="COG0688">
    <property type="taxonomic scope" value="Bacteria"/>
</dbReference>
<dbReference type="UniPathway" id="UPA00558">
    <property type="reaction ID" value="UER00616"/>
</dbReference>
<dbReference type="Proteomes" id="UP000008215">
    <property type="component" value="Chromosome"/>
</dbReference>
<dbReference type="GO" id="GO:0005886">
    <property type="term" value="C:plasma membrane"/>
    <property type="evidence" value="ECO:0007669"/>
    <property type="project" value="UniProtKB-SubCell"/>
</dbReference>
<dbReference type="GO" id="GO:0004609">
    <property type="term" value="F:phosphatidylserine decarboxylase activity"/>
    <property type="evidence" value="ECO:0007669"/>
    <property type="project" value="UniProtKB-UniRule"/>
</dbReference>
<dbReference type="GO" id="GO:0006646">
    <property type="term" value="P:phosphatidylethanolamine biosynthetic process"/>
    <property type="evidence" value="ECO:0007669"/>
    <property type="project" value="UniProtKB-UniRule"/>
</dbReference>
<dbReference type="HAMAP" id="MF_00664">
    <property type="entry name" value="PS_decarb_PSD_A"/>
    <property type="match status" value="1"/>
</dbReference>
<dbReference type="InterPro" id="IPR003817">
    <property type="entry name" value="PS_Dcarbxylase"/>
</dbReference>
<dbReference type="InterPro" id="IPR033175">
    <property type="entry name" value="PSD-A"/>
</dbReference>
<dbReference type="NCBIfam" id="NF003678">
    <property type="entry name" value="PRK05305.1-2"/>
    <property type="match status" value="1"/>
</dbReference>
<dbReference type="NCBIfam" id="NF003684">
    <property type="entry name" value="PRK05305.2-4"/>
    <property type="match status" value="1"/>
</dbReference>
<dbReference type="NCBIfam" id="NF003685">
    <property type="entry name" value="PRK05305.2-5"/>
    <property type="match status" value="1"/>
</dbReference>
<dbReference type="PANTHER" id="PTHR35809">
    <property type="entry name" value="ARCHAETIDYLSERINE DECARBOXYLASE PROENZYME-RELATED"/>
    <property type="match status" value="1"/>
</dbReference>
<dbReference type="PANTHER" id="PTHR35809:SF1">
    <property type="entry name" value="ARCHAETIDYLSERINE DECARBOXYLASE PROENZYME-RELATED"/>
    <property type="match status" value="1"/>
</dbReference>
<dbReference type="Pfam" id="PF02666">
    <property type="entry name" value="PS_Dcarbxylase"/>
    <property type="match status" value="1"/>
</dbReference>
<protein>
    <recommendedName>
        <fullName evidence="1">Phosphatidylserine decarboxylase proenzyme</fullName>
        <ecNumber evidence="1">4.1.1.65</ecNumber>
    </recommendedName>
    <component>
        <recommendedName>
            <fullName evidence="1">Phosphatidylserine decarboxylase alpha chain</fullName>
        </recommendedName>
    </component>
    <component>
        <recommendedName>
            <fullName evidence="1">Phosphatidylserine decarboxylase beta chain</fullName>
        </recommendedName>
    </component>
</protein>
<comment type="function">
    <text evidence="1">Catalyzes the formation of phosphatidylethanolamine (PtdEtn) from phosphatidylserine (PtdSer).</text>
</comment>
<comment type="catalytic activity">
    <reaction evidence="1">
        <text>a 1,2-diacyl-sn-glycero-3-phospho-L-serine + H(+) = a 1,2-diacyl-sn-glycero-3-phosphoethanolamine + CO2</text>
        <dbReference type="Rhea" id="RHEA:20828"/>
        <dbReference type="ChEBI" id="CHEBI:15378"/>
        <dbReference type="ChEBI" id="CHEBI:16526"/>
        <dbReference type="ChEBI" id="CHEBI:57262"/>
        <dbReference type="ChEBI" id="CHEBI:64612"/>
        <dbReference type="EC" id="4.1.1.65"/>
    </reaction>
</comment>
<comment type="cofactor">
    <cofactor evidence="1">
        <name>pyruvate</name>
        <dbReference type="ChEBI" id="CHEBI:15361"/>
    </cofactor>
    <text evidence="1">Binds 1 pyruvoyl group covalently per subunit.</text>
</comment>
<comment type="pathway">
    <text evidence="1">Phospholipid metabolism; phosphatidylethanolamine biosynthesis; phosphatidylethanolamine from CDP-diacylglycerol: step 2/2.</text>
</comment>
<comment type="subunit">
    <text evidence="1">Heterodimer of a large membrane-associated beta subunit and a small pyruvoyl-containing alpha subunit.</text>
</comment>
<comment type="subcellular location">
    <subcellularLocation>
        <location evidence="1">Cell membrane</location>
        <topology evidence="1">Peripheral membrane protein</topology>
    </subcellularLocation>
</comment>
<comment type="PTM">
    <text evidence="1">Is synthesized initially as an inactive proenzyme. Formation of the active enzyme involves a self-maturation process in which the active site pyruvoyl group is generated from an internal serine residue via an autocatalytic post-translational modification. Two non-identical subunits are generated from the proenzyme in this reaction, and the pyruvate is formed at the N-terminus of the alpha chain, which is derived from the carboxyl end of the proenzyme. The post-translation cleavage follows an unusual pathway, termed non-hydrolytic serinolysis, in which the side chain hydroxyl group of the serine supplies its oxygen atom to form the C-terminus of the beta chain, while the remainder of the serine residue undergoes an oxidative deamination to produce ammonia and the pyruvoyl prosthetic group on the alpha chain.</text>
</comment>
<comment type="similarity">
    <text evidence="1">Belongs to the phosphatidylserine decarboxylase family. PSD-A subfamily.</text>
</comment>
<name>PSD_WOLPM</name>
<reference key="1">
    <citation type="journal article" date="2004" name="PLoS Biol.">
        <title>Phylogenomics of the reproductive parasite Wolbachia pipientis wMel: a streamlined genome overrun by mobile genetic elements.</title>
        <authorList>
            <person name="Wu M."/>
            <person name="Sun L.V."/>
            <person name="Vamathevan J.J."/>
            <person name="Riegler M."/>
            <person name="DeBoy R.T."/>
            <person name="Brownlie J.C."/>
            <person name="McGraw E.A."/>
            <person name="Martin W."/>
            <person name="Esser C."/>
            <person name="Ahmadinejad N."/>
            <person name="Wiegand C."/>
            <person name="Madupu R."/>
            <person name="Beanan M.J."/>
            <person name="Brinkac L.M."/>
            <person name="Daugherty S.C."/>
            <person name="Durkin A.S."/>
            <person name="Kolonay J.F."/>
            <person name="Nelson W.C."/>
            <person name="Mohamoud Y."/>
            <person name="Lee P."/>
            <person name="Berry K.J."/>
            <person name="Young M.B."/>
            <person name="Utterback T.R."/>
            <person name="Weidman J.F."/>
            <person name="Nierman W.C."/>
            <person name="Paulsen I.T."/>
            <person name="Nelson K.E."/>
            <person name="Tettelin H."/>
            <person name="O'Neill S.L."/>
            <person name="Eisen J.A."/>
        </authorList>
    </citation>
    <scope>NUCLEOTIDE SEQUENCE [LARGE SCALE GENOMIC DNA]</scope>
</reference>
<sequence length="230" mass="25537">MCFGLPNINREGYSFIVVSFIVTCIAFSISWGFGVTCLFPTLLCTYFFRDPARAVPNNKNLILSPADGVISKIEEVNYPLSAENGEEKKFTLVSIFLSVLNVHVNRIPISGTIKEMSYKKGKFVSAMSNRSSNENEKQVIVIEYEKGKEIIVEQIAGLIARRIVCNLGISQNVKAGERFGIIRFGSRVNIYVPADTEVRVSEGQTVIGGETIIANLNKENVQEKLTFDVI</sequence>
<gene>
    <name evidence="1" type="primary">psd</name>
    <name type="ordered locus">WD_1049</name>
</gene>